<proteinExistence type="inferred from homology"/>
<gene>
    <name type="ordered locus">BPSL3425</name>
</gene>
<feature type="chain" id="PRO_0000231444" description="Putative pterin-4-alpha-carbinolamine dehydratase">
    <location>
        <begin position="1"/>
        <end position="101"/>
    </location>
</feature>
<keyword id="KW-0456">Lyase</keyword>
<keyword id="KW-1185">Reference proteome</keyword>
<comment type="catalytic activity">
    <reaction evidence="1">
        <text>(4aS,6R)-4a-hydroxy-L-erythro-5,6,7,8-tetrahydrobiopterin = (6R)-L-erythro-6,7-dihydrobiopterin + H2O</text>
        <dbReference type="Rhea" id="RHEA:11920"/>
        <dbReference type="ChEBI" id="CHEBI:15377"/>
        <dbReference type="ChEBI" id="CHEBI:15642"/>
        <dbReference type="ChEBI" id="CHEBI:43120"/>
        <dbReference type="EC" id="4.2.1.96"/>
    </reaction>
</comment>
<comment type="similarity">
    <text evidence="1">Belongs to the pterin-4-alpha-carbinolamine dehydratase family.</text>
</comment>
<name>PHS_BURPS</name>
<accession>Q63PF1</accession>
<sequence length="101" mass="11681">MIHKLTSEERKTQLESLHHWTAVPGRDAIQRSLRFADFNEAFGFMTRVAIKAQEMNHHPEWFNVYNRVDVTLSTHDANGLTERDIKLAHFIDEVGKHAKAA</sequence>
<protein>
    <recommendedName>
        <fullName evidence="1">Putative pterin-4-alpha-carbinolamine dehydratase</fullName>
        <shortName evidence="1">PHS</shortName>
        <ecNumber evidence="1">4.2.1.96</ecNumber>
    </recommendedName>
    <alternativeName>
        <fullName evidence="1">4-alpha-hydroxy-tetrahydropterin dehydratase</fullName>
    </alternativeName>
    <alternativeName>
        <fullName evidence="1">Pterin carbinolamine dehydratase</fullName>
        <shortName evidence="1">PCD</shortName>
    </alternativeName>
</protein>
<evidence type="ECO:0000255" key="1">
    <source>
        <dbReference type="HAMAP-Rule" id="MF_00434"/>
    </source>
</evidence>
<organism>
    <name type="scientific">Burkholderia pseudomallei (strain K96243)</name>
    <dbReference type="NCBI Taxonomy" id="272560"/>
    <lineage>
        <taxon>Bacteria</taxon>
        <taxon>Pseudomonadati</taxon>
        <taxon>Pseudomonadota</taxon>
        <taxon>Betaproteobacteria</taxon>
        <taxon>Burkholderiales</taxon>
        <taxon>Burkholderiaceae</taxon>
        <taxon>Burkholderia</taxon>
        <taxon>pseudomallei group</taxon>
    </lineage>
</organism>
<reference key="1">
    <citation type="journal article" date="2004" name="Proc. Natl. Acad. Sci. U.S.A.">
        <title>Genomic plasticity of the causative agent of melioidosis, Burkholderia pseudomallei.</title>
        <authorList>
            <person name="Holden M.T.G."/>
            <person name="Titball R.W."/>
            <person name="Peacock S.J."/>
            <person name="Cerdeno-Tarraga A.-M."/>
            <person name="Atkins T."/>
            <person name="Crossman L.C."/>
            <person name="Pitt T."/>
            <person name="Churcher C."/>
            <person name="Mungall K.L."/>
            <person name="Bentley S.D."/>
            <person name="Sebaihia M."/>
            <person name="Thomson N.R."/>
            <person name="Bason N."/>
            <person name="Beacham I.R."/>
            <person name="Brooks K."/>
            <person name="Brown K.A."/>
            <person name="Brown N.F."/>
            <person name="Challis G.L."/>
            <person name="Cherevach I."/>
            <person name="Chillingworth T."/>
            <person name="Cronin A."/>
            <person name="Crossett B."/>
            <person name="Davis P."/>
            <person name="DeShazer D."/>
            <person name="Feltwell T."/>
            <person name="Fraser A."/>
            <person name="Hance Z."/>
            <person name="Hauser H."/>
            <person name="Holroyd S."/>
            <person name="Jagels K."/>
            <person name="Keith K.E."/>
            <person name="Maddison M."/>
            <person name="Moule S."/>
            <person name="Price C."/>
            <person name="Quail M.A."/>
            <person name="Rabbinowitsch E."/>
            <person name="Rutherford K."/>
            <person name="Sanders M."/>
            <person name="Simmonds M."/>
            <person name="Songsivilai S."/>
            <person name="Stevens K."/>
            <person name="Tumapa S."/>
            <person name="Vesaratchavest M."/>
            <person name="Whitehead S."/>
            <person name="Yeats C."/>
            <person name="Barrell B.G."/>
            <person name="Oyston P.C.F."/>
            <person name="Parkhill J."/>
        </authorList>
    </citation>
    <scope>NUCLEOTIDE SEQUENCE [LARGE SCALE GENOMIC DNA]</scope>
    <source>
        <strain>K96243</strain>
    </source>
</reference>
<dbReference type="EC" id="4.2.1.96" evidence="1"/>
<dbReference type="EMBL" id="BX571965">
    <property type="protein sequence ID" value="CAH37437.1"/>
    <property type="molecule type" value="Genomic_DNA"/>
</dbReference>
<dbReference type="RefSeq" id="WP_004201313.1">
    <property type="nucleotide sequence ID" value="NZ_CP009538.1"/>
</dbReference>
<dbReference type="RefSeq" id="YP_110018.1">
    <property type="nucleotide sequence ID" value="NC_006350.1"/>
</dbReference>
<dbReference type="SMR" id="Q63PF1"/>
<dbReference type="STRING" id="272560.BPSL3425"/>
<dbReference type="KEGG" id="bps:BPSL3425"/>
<dbReference type="PATRIC" id="fig|272560.51.peg.1760"/>
<dbReference type="eggNOG" id="COG2154">
    <property type="taxonomic scope" value="Bacteria"/>
</dbReference>
<dbReference type="Proteomes" id="UP000000605">
    <property type="component" value="Chromosome 1"/>
</dbReference>
<dbReference type="GO" id="GO:0008124">
    <property type="term" value="F:4-alpha-hydroxytetrahydrobiopterin dehydratase activity"/>
    <property type="evidence" value="ECO:0007669"/>
    <property type="project" value="UniProtKB-UniRule"/>
</dbReference>
<dbReference type="GO" id="GO:0006729">
    <property type="term" value="P:tetrahydrobiopterin biosynthetic process"/>
    <property type="evidence" value="ECO:0007669"/>
    <property type="project" value="InterPro"/>
</dbReference>
<dbReference type="CDD" id="cd00914">
    <property type="entry name" value="PCD_DCoH_subfamily_b"/>
    <property type="match status" value="1"/>
</dbReference>
<dbReference type="Gene3D" id="3.30.1360.20">
    <property type="entry name" value="Transcriptional coactivator/pterin dehydratase"/>
    <property type="match status" value="1"/>
</dbReference>
<dbReference type="HAMAP" id="MF_00434">
    <property type="entry name" value="Pterin_4_alpha"/>
    <property type="match status" value="1"/>
</dbReference>
<dbReference type="InterPro" id="IPR036428">
    <property type="entry name" value="PCD_sf"/>
</dbReference>
<dbReference type="InterPro" id="IPR001533">
    <property type="entry name" value="Pterin_deHydtase"/>
</dbReference>
<dbReference type="NCBIfam" id="NF002017">
    <property type="entry name" value="PRK00823.1-2"/>
    <property type="match status" value="1"/>
</dbReference>
<dbReference type="NCBIfam" id="NF002018">
    <property type="entry name" value="PRK00823.1-3"/>
    <property type="match status" value="1"/>
</dbReference>
<dbReference type="NCBIfam" id="NF002020">
    <property type="entry name" value="PRK00823.1-5"/>
    <property type="match status" value="1"/>
</dbReference>
<dbReference type="PANTHER" id="PTHR12599">
    <property type="entry name" value="PTERIN-4-ALPHA-CARBINOLAMINE DEHYDRATASE"/>
    <property type="match status" value="1"/>
</dbReference>
<dbReference type="PANTHER" id="PTHR12599:SF0">
    <property type="entry name" value="PTERIN-4-ALPHA-CARBINOLAMINE DEHYDRATASE"/>
    <property type="match status" value="1"/>
</dbReference>
<dbReference type="Pfam" id="PF01329">
    <property type="entry name" value="Pterin_4a"/>
    <property type="match status" value="1"/>
</dbReference>
<dbReference type="SUPFAM" id="SSF55248">
    <property type="entry name" value="PCD-like"/>
    <property type="match status" value="1"/>
</dbReference>